<sequence length="126" mass="13904">MSVMDLANTCSSFQSDLDFCSDCGSVLPLPGAQDTVTCIRCGFNINVRDFEGKVVKTSVVFHQLGTAMPMSVEEGPECQGPVVDRRCPRCGHEGMAYHTRQMRSADEGQTVFYTCTNCKFQEKEDS</sequence>
<name>RPA12_PANTR</name>
<organism>
    <name type="scientific">Pan troglodytes</name>
    <name type="common">Chimpanzee</name>
    <dbReference type="NCBI Taxonomy" id="9598"/>
    <lineage>
        <taxon>Eukaryota</taxon>
        <taxon>Metazoa</taxon>
        <taxon>Chordata</taxon>
        <taxon>Craniata</taxon>
        <taxon>Vertebrata</taxon>
        <taxon>Euteleostomi</taxon>
        <taxon>Mammalia</taxon>
        <taxon>Eutheria</taxon>
        <taxon>Euarchontoglires</taxon>
        <taxon>Primates</taxon>
        <taxon>Haplorrhini</taxon>
        <taxon>Catarrhini</taxon>
        <taxon>Hominidae</taxon>
        <taxon>Pan</taxon>
    </lineage>
</organism>
<dbReference type="EMBL" id="AB210195">
    <property type="protein sequence ID" value="BAE92809.1"/>
    <property type="molecule type" value="Genomic_DNA"/>
</dbReference>
<dbReference type="EMBL" id="AB210196">
    <property type="protein sequence ID" value="BAE92812.1"/>
    <property type="molecule type" value="Genomic_DNA"/>
</dbReference>
<dbReference type="RefSeq" id="NP_001065276.1">
    <property type="nucleotide sequence ID" value="NM_001071808.1"/>
</dbReference>
<dbReference type="RefSeq" id="XP_009449130.1">
    <property type="nucleotide sequence ID" value="XM_009450855.2"/>
</dbReference>
<dbReference type="RefSeq" id="XP_009449131.1">
    <property type="nucleotide sequence ID" value="XM_009450856.2"/>
</dbReference>
<dbReference type="RefSeq" id="XP_016810193.1">
    <property type="nucleotide sequence ID" value="XM_016954704.1"/>
</dbReference>
<dbReference type="SMR" id="Q1XHV8"/>
<dbReference type="FunCoup" id="Q1XHV8">
    <property type="interactions" value="1768"/>
</dbReference>
<dbReference type="STRING" id="9598.ENSPTRP00000030553"/>
<dbReference type="PaxDb" id="9598-ENSPTRP00000030553"/>
<dbReference type="Ensembl" id="ENSPTRT00000033072.4">
    <property type="protein sequence ID" value="ENSPTRP00000030553.3"/>
    <property type="gene ID" value="ENSPTRG00000017914.7"/>
</dbReference>
<dbReference type="GeneID" id="471952"/>
<dbReference type="KEGG" id="ptr:471952"/>
<dbReference type="CTD" id="30834"/>
<dbReference type="VGNC" id="VGNC:11686">
    <property type="gene designation" value="POLR1H"/>
</dbReference>
<dbReference type="eggNOG" id="KOG2907">
    <property type="taxonomic scope" value="Eukaryota"/>
</dbReference>
<dbReference type="GeneTree" id="ENSGT00390000008126"/>
<dbReference type="HOGENOM" id="CLU_093932_1_2_1"/>
<dbReference type="InParanoid" id="Q1XHV8"/>
<dbReference type="OMA" id="EMQYHTL"/>
<dbReference type="OrthoDB" id="370at9604"/>
<dbReference type="TreeFam" id="TF313881"/>
<dbReference type="Proteomes" id="UP000002277">
    <property type="component" value="Chromosome 6"/>
</dbReference>
<dbReference type="Bgee" id="ENSPTRG00000017914">
    <property type="expression patterns" value="Expressed in testis and 21 other cell types or tissues"/>
</dbReference>
<dbReference type="GO" id="GO:0005736">
    <property type="term" value="C:RNA polymerase I complex"/>
    <property type="evidence" value="ECO:0000318"/>
    <property type="project" value="GO_Central"/>
</dbReference>
<dbReference type="GO" id="GO:0003899">
    <property type="term" value="F:DNA-directed RNA polymerase activity"/>
    <property type="evidence" value="ECO:0007669"/>
    <property type="project" value="InterPro"/>
</dbReference>
<dbReference type="GO" id="GO:0003676">
    <property type="term" value="F:nucleic acid binding"/>
    <property type="evidence" value="ECO:0007669"/>
    <property type="project" value="InterPro"/>
</dbReference>
<dbReference type="GO" id="GO:0008270">
    <property type="term" value="F:zinc ion binding"/>
    <property type="evidence" value="ECO:0007669"/>
    <property type="project" value="UniProtKB-KW"/>
</dbReference>
<dbReference type="GO" id="GO:0006363">
    <property type="term" value="P:termination of RNA polymerase I transcription"/>
    <property type="evidence" value="ECO:0000318"/>
    <property type="project" value="GO_Central"/>
</dbReference>
<dbReference type="CDD" id="cd10507">
    <property type="entry name" value="Zn-ribbon_RPA12"/>
    <property type="match status" value="1"/>
</dbReference>
<dbReference type="FunFam" id="2.20.25.10:FF:000020">
    <property type="entry name" value="DNA-directed RNA polymerase subunit"/>
    <property type="match status" value="1"/>
</dbReference>
<dbReference type="Gene3D" id="2.20.25.10">
    <property type="match status" value="1"/>
</dbReference>
<dbReference type="InterPro" id="IPR019761">
    <property type="entry name" value="DNA-dir_RNA_pol-M_15_CS"/>
</dbReference>
<dbReference type="InterPro" id="IPR012164">
    <property type="entry name" value="Rpa12/Rpb9/Rpc10/TFS"/>
</dbReference>
<dbReference type="InterPro" id="IPR034004">
    <property type="entry name" value="Zn_ribbon_RPA12_C"/>
</dbReference>
<dbReference type="InterPro" id="IPR001222">
    <property type="entry name" value="Znf_TFIIS"/>
</dbReference>
<dbReference type="PANTHER" id="PTHR11239">
    <property type="entry name" value="DNA-DIRECTED RNA POLYMERASE"/>
    <property type="match status" value="1"/>
</dbReference>
<dbReference type="PANTHER" id="PTHR11239:SF14">
    <property type="entry name" value="DNA-DIRECTED RNA POLYMERASE I SUBUNIT RPA12"/>
    <property type="match status" value="1"/>
</dbReference>
<dbReference type="Pfam" id="PF01096">
    <property type="entry name" value="Zn_ribbon_TFIIS"/>
    <property type="match status" value="1"/>
</dbReference>
<dbReference type="PIRSF" id="PIRSF005586">
    <property type="entry name" value="RNApol_RpoM"/>
    <property type="match status" value="1"/>
</dbReference>
<dbReference type="SMART" id="SM00440">
    <property type="entry name" value="ZnF_C2C2"/>
    <property type="match status" value="1"/>
</dbReference>
<dbReference type="SUPFAM" id="SSF57783">
    <property type="entry name" value="Zinc beta-ribbon"/>
    <property type="match status" value="1"/>
</dbReference>
<dbReference type="PROSITE" id="PS01030">
    <property type="entry name" value="RNA_POL_M_15KD"/>
    <property type="match status" value="1"/>
</dbReference>
<dbReference type="PROSITE" id="PS00466">
    <property type="entry name" value="ZF_TFIIS_1"/>
    <property type="match status" value="1"/>
</dbReference>
<dbReference type="PROSITE" id="PS51133">
    <property type="entry name" value="ZF_TFIIS_2"/>
    <property type="match status" value="1"/>
</dbReference>
<comment type="function">
    <text evidence="1">Core component of RNA polymerase I (Pol I), a DNA-dependent RNA polymerase which synthesizes ribosomal RNA precursors using the four ribonucleoside triphosphates as substrates. Can mediate Pol I proofreading of the nascent RNA transcript. Anchors into the Pol I active site to monitor transcription fidelity and cleave mis-incorporated 5'-ribonucleotides.</text>
</comment>
<comment type="subunit">
    <text evidence="1">Component of the RNA polymerase I (Pol I) complex consisting of 13 subunits: a ten-subunit catalytic core composed of POLR1A/RPA1, POLR1B/RPA2, POLR1C/RPAC1, POLR1D/RPAC2, POLR1H/RPA12, POLR2E/RPABC1, POLR2F/RPABC2, POLR2H/RPABC3, POLR2K/RPABC4 and POLR2L/RPABC5; a mobile stalk subunit POLR1F/RPA43 protruding from the core and additional subunits homologous to general transcription factors POLR1E/RPA49 and POLR1G/RPA34. Part of Pol I pre-initiation complex (PIC), in which Pol I core assembles with RRN3 and promoter-bound UTBF and SL1/TIF-IB complex.</text>
</comment>
<comment type="subcellular location">
    <subcellularLocation>
        <location evidence="1">Nucleus</location>
        <location evidence="1">Nucleolus</location>
    </subcellularLocation>
</comment>
<comment type="domain">
    <text evidence="1 2">The TFIIS-type zinc-binding beta-ribbon domain contains an acidic hairpin motif (residues Asp-106, Glu-107) that likely coordinates the nucleophilic water and magnesium to cleave the scissile phosphodiester bond and release the mis-incorporated 5'-ribonucleotides.</text>
</comment>
<comment type="similarity">
    <text evidence="5">Belongs to the archaeal RpoM/eukaryotic RPA12/RPB9/RPC11 RNA polymerase family.</text>
</comment>
<keyword id="KW-0240">DNA-directed RNA polymerase</keyword>
<keyword id="KW-0479">Metal-binding</keyword>
<keyword id="KW-0539">Nucleus</keyword>
<keyword id="KW-1185">Reference proteome</keyword>
<keyword id="KW-0804">Transcription</keyword>
<keyword id="KW-0862">Zinc</keyword>
<keyword id="KW-0863">Zinc-finger</keyword>
<gene>
    <name evidence="1" type="primary">POLR1H</name>
</gene>
<proteinExistence type="inferred from homology"/>
<evidence type="ECO:0000250" key="1">
    <source>
        <dbReference type="UniProtKB" id="Q9P1U0"/>
    </source>
</evidence>
<evidence type="ECO:0000250" key="2">
    <source>
        <dbReference type="UniProtKB" id="Q9Y2Y1"/>
    </source>
</evidence>
<evidence type="ECO:0000255" key="3">
    <source>
        <dbReference type="PROSITE-ProRule" id="PRU00472"/>
    </source>
</evidence>
<evidence type="ECO:0000255" key="4">
    <source>
        <dbReference type="PROSITE-ProRule" id="PRU10145"/>
    </source>
</evidence>
<evidence type="ECO:0000305" key="5"/>
<feature type="chain" id="PRO_0000245340" description="DNA-directed RNA polymerase I subunit RPA12">
    <location>
        <begin position="1"/>
        <end position="126"/>
    </location>
</feature>
<feature type="zinc finger region" description="C4-type" evidence="1">
    <location>
        <begin position="20"/>
        <end position="41"/>
    </location>
</feature>
<feature type="zinc finger region" description="TFIIS-type" evidence="3">
    <location>
        <begin position="83"/>
        <end position="123"/>
    </location>
</feature>
<feature type="short sequence motif" description="Hairpin" evidence="1 2">
    <location>
        <begin position="106"/>
        <end position="107"/>
    </location>
</feature>
<feature type="binding site" evidence="4">
    <location>
        <position position="20"/>
    </location>
    <ligand>
        <name>Zn(2+)</name>
        <dbReference type="ChEBI" id="CHEBI:29105"/>
        <label>1</label>
    </ligand>
</feature>
<feature type="binding site" evidence="4">
    <location>
        <position position="23"/>
    </location>
    <ligand>
        <name>Zn(2+)</name>
        <dbReference type="ChEBI" id="CHEBI:29105"/>
        <label>1</label>
    </ligand>
</feature>
<feature type="binding site" evidence="4">
    <location>
        <position position="38"/>
    </location>
    <ligand>
        <name>Zn(2+)</name>
        <dbReference type="ChEBI" id="CHEBI:29105"/>
        <label>1</label>
    </ligand>
</feature>
<feature type="binding site" evidence="4">
    <location>
        <position position="41"/>
    </location>
    <ligand>
        <name>Zn(2+)</name>
        <dbReference type="ChEBI" id="CHEBI:29105"/>
        <label>1</label>
    </ligand>
</feature>
<feature type="binding site" evidence="3">
    <location>
        <position position="87"/>
    </location>
    <ligand>
        <name>Zn(2+)</name>
        <dbReference type="ChEBI" id="CHEBI:29105"/>
        <label>2</label>
    </ligand>
</feature>
<feature type="binding site" evidence="3">
    <location>
        <position position="90"/>
    </location>
    <ligand>
        <name>Zn(2+)</name>
        <dbReference type="ChEBI" id="CHEBI:29105"/>
        <label>2</label>
    </ligand>
</feature>
<feature type="binding site" evidence="3">
    <location>
        <position position="115"/>
    </location>
    <ligand>
        <name>Zn(2+)</name>
        <dbReference type="ChEBI" id="CHEBI:29105"/>
        <label>2</label>
    </ligand>
</feature>
<feature type="binding site" evidence="3">
    <location>
        <position position="118"/>
    </location>
    <ligand>
        <name>Zn(2+)</name>
        <dbReference type="ChEBI" id="CHEBI:29105"/>
        <label>2</label>
    </ligand>
</feature>
<accession>Q1XHV8</accession>
<protein>
    <recommendedName>
        <fullName evidence="1">DNA-directed RNA polymerase I subunit RPA12</fullName>
    </recommendedName>
    <alternativeName>
        <fullName evidence="1">DNA-directed RNA polymerase I subunit H</fullName>
    </alternativeName>
</protein>
<reference key="1">
    <citation type="journal article" date="2006" name="Genetics">
        <title>Rapid evolution of major histocompatibility complex class I genes in primates generates new disease alleles in humans via hitchhiking diversity.</title>
        <authorList>
            <person name="Shiina T."/>
            <person name="Ota M."/>
            <person name="Shimizu S."/>
            <person name="Katsuyama Y."/>
            <person name="Hashimoto N."/>
            <person name="Takasu M."/>
            <person name="Anzai T."/>
            <person name="Kulski J.K."/>
            <person name="Kikkawa E."/>
            <person name="Naruse T."/>
            <person name="Kimura N."/>
            <person name="Yanagiya K."/>
            <person name="Watanabe A."/>
            <person name="Hosomichi K."/>
            <person name="Kohara S."/>
            <person name="Iwamoto C."/>
            <person name="Umehara Y."/>
            <person name="Meyer A."/>
            <person name="Wanner V."/>
            <person name="Sano K."/>
            <person name="Macquin C."/>
            <person name="Ikeo K."/>
            <person name="Tokunaga K."/>
            <person name="Gojobori T."/>
            <person name="Inoko H."/>
            <person name="Bahram S."/>
        </authorList>
    </citation>
    <scope>NUCLEOTIDE SEQUENCE [LARGE SCALE GENOMIC DNA]</scope>
</reference>